<feature type="chain" id="PRO_0000347486" description="Alanine--tRNA ligase">
    <location>
        <begin position="1"/>
        <end position="880"/>
    </location>
</feature>
<feature type="binding site" evidence="1">
    <location>
        <position position="566"/>
    </location>
    <ligand>
        <name>Zn(2+)</name>
        <dbReference type="ChEBI" id="CHEBI:29105"/>
    </ligand>
</feature>
<feature type="binding site" evidence="1">
    <location>
        <position position="570"/>
    </location>
    <ligand>
        <name>Zn(2+)</name>
        <dbReference type="ChEBI" id="CHEBI:29105"/>
    </ligand>
</feature>
<feature type="binding site" evidence="1">
    <location>
        <position position="668"/>
    </location>
    <ligand>
        <name>Zn(2+)</name>
        <dbReference type="ChEBI" id="CHEBI:29105"/>
    </ligand>
</feature>
<feature type="binding site" evidence="1">
    <location>
        <position position="672"/>
    </location>
    <ligand>
        <name>Zn(2+)</name>
        <dbReference type="ChEBI" id="CHEBI:29105"/>
    </ligand>
</feature>
<sequence length="880" mass="98437">MKKLGVNEIRKEFLEFFRSKEHIIHPSAPLVPQKDKSLLLINSGMAPLKPYFAGLEEPPGKRMATCQKCIRTGDIENVGRTARHATFFEMLGNFSFGDYFKKESLTWGWEFVTKNLELPVDKLWATVYVDDDEAFEIWNKQIGLPEERIVRLGKADNFWEIGLGPCGPCSEIYFDRGEDYGCGCEECKPGCECDRYVEFWNHVFTQFDRDEEGNYHPLPNPNIDTGMGLERMACIMQGVDSIFDIDTMQDILNSVCKITSSEYKKDERTDVSIRIITDHVRSISLMIGDGILPSNEGRGYVLRRLLRRAARHGKLLGVNRAFLYELVDRVADNYGETYVELVDNKDYIKRVIKVEEERFMETIDQGMDILNQYIEELVTLKETVLSGVNAFKLYDTYGFPFDLTKEILEEKGLSLDETGFESEMEKQRQRARDARIGADTEGWKEDIFSGLDKEIQTAFKGYTNFEVEGKVLAIVSNDTVVEQCDKGKEATVILDETAFYGEGGGQVGDIGTLYNEAVRLSVLDTKKGPHNQVHHVVRVEEGTIKIGDEVKAKVDMVTRMSTARNHTATHLLHKALRDIVGEHVHQAGSLVTPDRLRFDFTHFEGLTKDQITQIEEKVNQQILMALDVRTFETSIEDAKKIGAQALFGEKYGDVVRVVKVGEYSTELCGGTHVTNSGEIGMFIMLSEAGVAAGVRRIEAITGMEAYKYVQKNQKTIQEIADTLKTQVQNVVERVADLVHETKEKDREINKLKSQLASNSTGDILDKATVVGGINVVVEVLENQEMDDLRKIGDVLKEKIGSGVIVLGSSNQDKVNFVAMATKDAVSKGVHAGNLVKEAAKIAGGGGGGRPDMAQAGGKNPQKIQEALDTVKEILVNQLNQ</sequence>
<proteinExistence type="inferred from homology"/>
<gene>
    <name evidence="1" type="primary">alaS</name>
    <name type="ordered locus">Clos_1666</name>
</gene>
<keyword id="KW-0030">Aminoacyl-tRNA synthetase</keyword>
<keyword id="KW-0067">ATP-binding</keyword>
<keyword id="KW-0963">Cytoplasm</keyword>
<keyword id="KW-0436">Ligase</keyword>
<keyword id="KW-0479">Metal-binding</keyword>
<keyword id="KW-0547">Nucleotide-binding</keyword>
<keyword id="KW-0648">Protein biosynthesis</keyword>
<keyword id="KW-1185">Reference proteome</keyword>
<keyword id="KW-0694">RNA-binding</keyword>
<keyword id="KW-0820">tRNA-binding</keyword>
<keyword id="KW-0862">Zinc</keyword>
<protein>
    <recommendedName>
        <fullName evidence="1">Alanine--tRNA ligase</fullName>
        <ecNumber evidence="1">6.1.1.7</ecNumber>
    </recommendedName>
    <alternativeName>
        <fullName evidence="1">Alanyl-tRNA synthetase</fullName>
        <shortName evidence="1">AlaRS</shortName>
    </alternativeName>
</protein>
<accession>A8MGI3</accession>
<evidence type="ECO:0000255" key="1">
    <source>
        <dbReference type="HAMAP-Rule" id="MF_00036"/>
    </source>
</evidence>
<reference key="1">
    <citation type="submission" date="2007-10" db="EMBL/GenBank/DDBJ databases">
        <title>Complete genome of Alkaliphilus oremlandii OhILAs.</title>
        <authorList>
            <person name="Copeland A."/>
            <person name="Lucas S."/>
            <person name="Lapidus A."/>
            <person name="Barry K."/>
            <person name="Detter J.C."/>
            <person name="Glavina del Rio T."/>
            <person name="Hammon N."/>
            <person name="Israni S."/>
            <person name="Dalin E."/>
            <person name="Tice H."/>
            <person name="Pitluck S."/>
            <person name="Chain P."/>
            <person name="Malfatti S."/>
            <person name="Shin M."/>
            <person name="Vergez L."/>
            <person name="Schmutz J."/>
            <person name="Larimer F."/>
            <person name="Land M."/>
            <person name="Hauser L."/>
            <person name="Kyrpides N."/>
            <person name="Mikhailova N."/>
            <person name="Stolz J.F."/>
            <person name="Dawson A."/>
            <person name="Fisher E."/>
            <person name="Crable B."/>
            <person name="Perera E."/>
            <person name="Lisak J."/>
            <person name="Ranganathan M."/>
            <person name="Basu P."/>
            <person name="Richardson P."/>
        </authorList>
    </citation>
    <scope>NUCLEOTIDE SEQUENCE [LARGE SCALE GENOMIC DNA]</scope>
    <source>
        <strain>OhILAs</strain>
    </source>
</reference>
<name>SYA_ALKOO</name>
<organism>
    <name type="scientific">Alkaliphilus oremlandii (strain OhILAs)</name>
    <name type="common">Clostridium oremlandii (strain OhILAs)</name>
    <dbReference type="NCBI Taxonomy" id="350688"/>
    <lineage>
        <taxon>Bacteria</taxon>
        <taxon>Bacillati</taxon>
        <taxon>Bacillota</taxon>
        <taxon>Clostridia</taxon>
        <taxon>Peptostreptococcales</taxon>
        <taxon>Natronincolaceae</taxon>
        <taxon>Alkaliphilus</taxon>
    </lineage>
</organism>
<comment type="function">
    <text evidence="1">Catalyzes the attachment of alanine to tRNA(Ala) in a two-step reaction: alanine is first activated by ATP to form Ala-AMP and then transferred to the acceptor end of tRNA(Ala). Also edits incorrectly charged Ser-tRNA(Ala) and Gly-tRNA(Ala) via its editing domain.</text>
</comment>
<comment type="catalytic activity">
    <reaction evidence="1">
        <text>tRNA(Ala) + L-alanine + ATP = L-alanyl-tRNA(Ala) + AMP + diphosphate</text>
        <dbReference type="Rhea" id="RHEA:12540"/>
        <dbReference type="Rhea" id="RHEA-COMP:9657"/>
        <dbReference type="Rhea" id="RHEA-COMP:9923"/>
        <dbReference type="ChEBI" id="CHEBI:30616"/>
        <dbReference type="ChEBI" id="CHEBI:33019"/>
        <dbReference type="ChEBI" id="CHEBI:57972"/>
        <dbReference type="ChEBI" id="CHEBI:78442"/>
        <dbReference type="ChEBI" id="CHEBI:78497"/>
        <dbReference type="ChEBI" id="CHEBI:456215"/>
        <dbReference type="EC" id="6.1.1.7"/>
    </reaction>
</comment>
<comment type="cofactor">
    <cofactor evidence="1">
        <name>Zn(2+)</name>
        <dbReference type="ChEBI" id="CHEBI:29105"/>
    </cofactor>
    <text evidence="1">Binds 1 zinc ion per subunit.</text>
</comment>
<comment type="subcellular location">
    <subcellularLocation>
        <location evidence="1">Cytoplasm</location>
    </subcellularLocation>
</comment>
<comment type="domain">
    <text evidence="1">Consists of three domains; the N-terminal catalytic domain, the editing domain and the C-terminal C-Ala domain. The editing domain removes incorrectly charged amino acids, while the C-Ala domain, along with tRNA(Ala), serves as a bridge to cooperatively bring together the editing and aminoacylation centers thus stimulating deacylation of misacylated tRNAs.</text>
</comment>
<comment type="similarity">
    <text evidence="1">Belongs to the class-II aminoacyl-tRNA synthetase family.</text>
</comment>
<dbReference type="EC" id="6.1.1.7" evidence="1"/>
<dbReference type="EMBL" id="CP000853">
    <property type="protein sequence ID" value="ABW19206.1"/>
    <property type="molecule type" value="Genomic_DNA"/>
</dbReference>
<dbReference type="RefSeq" id="WP_012159518.1">
    <property type="nucleotide sequence ID" value="NC_009922.1"/>
</dbReference>
<dbReference type="SMR" id="A8MGI3"/>
<dbReference type="STRING" id="350688.Clos_1666"/>
<dbReference type="KEGG" id="aoe:Clos_1666"/>
<dbReference type="eggNOG" id="COG0013">
    <property type="taxonomic scope" value="Bacteria"/>
</dbReference>
<dbReference type="HOGENOM" id="CLU_004485_1_1_9"/>
<dbReference type="OrthoDB" id="9803884at2"/>
<dbReference type="Proteomes" id="UP000000269">
    <property type="component" value="Chromosome"/>
</dbReference>
<dbReference type="GO" id="GO:0005829">
    <property type="term" value="C:cytosol"/>
    <property type="evidence" value="ECO:0007669"/>
    <property type="project" value="TreeGrafter"/>
</dbReference>
<dbReference type="GO" id="GO:0004813">
    <property type="term" value="F:alanine-tRNA ligase activity"/>
    <property type="evidence" value="ECO:0007669"/>
    <property type="project" value="UniProtKB-UniRule"/>
</dbReference>
<dbReference type="GO" id="GO:0002161">
    <property type="term" value="F:aminoacyl-tRNA deacylase activity"/>
    <property type="evidence" value="ECO:0007669"/>
    <property type="project" value="TreeGrafter"/>
</dbReference>
<dbReference type="GO" id="GO:0005524">
    <property type="term" value="F:ATP binding"/>
    <property type="evidence" value="ECO:0007669"/>
    <property type="project" value="UniProtKB-UniRule"/>
</dbReference>
<dbReference type="GO" id="GO:0140096">
    <property type="term" value="F:catalytic activity, acting on a protein"/>
    <property type="evidence" value="ECO:0007669"/>
    <property type="project" value="UniProtKB-ARBA"/>
</dbReference>
<dbReference type="GO" id="GO:0016740">
    <property type="term" value="F:transferase activity"/>
    <property type="evidence" value="ECO:0007669"/>
    <property type="project" value="UniProtKB-ARBA"/>
</dbReference>
<dbReference type="GO" id="GO:0000049">
    <property type="term" value="F:tRNA binding"/>
    <property type="evidence" value="ECO:0007669"/>
    <property type="project" value="UniProtKB-KW"/>
</dbReference>
<dbReference type="GO" id="GO:0008270">
    <property type="term" value="F:zinc ion binding"/>
    <property type="evidence" value="ECO:0007669"/>
    <property type="project" value="UniProtKB-UniRule"/>
</dbReference>
<dbReference type="GO" id="GO:0006419">
    <property type="term" value="P:alanyl-tRNA aminoacylation"/>
    <property type="evidence" value="ECO:0007669"/>
    <property type="project" value="UniProtKB-UniRule"/>
</dbReference>
<dbReference type="CDD" id="cd00673">
    <property type="entry name" value="AlaRS_core"/>
    <property type="match status" value="1"/>
</dbReference>
<dbReference type="FunFam" id="2.40.30.130:FF:000001">
    <property type="entry name" value="Alanine--tRNA ligase"/>
    <property type="match status" value="1"/>
</dbReference>
<dbReference type="FunFam" id="3.10.310.40:FF:000001">
    <property type="entry name" value="Alanine--tRNA ligase"/>
    <property type="match status" value="1"/>
</dbReference>
<dbReference type="FunFam" id="3.30.54.20:FF:000001">
    <property type="entry name" value="Alanine--tRNA ligase"/>
    <property type="match status" value="1"/>
</dbReference>
<dbReference type="FunFam" id="3.30.930.10:FF:000004">
    <property type="entry name" value="Alanine--tRNA ligase"/>
    <property type="match status" value="1"/>
</dbReference>
<dbReference type="FunFam" id="3.30.980.10:FF:000004">
    <property type="entry name" value="Alanine--tRNA ligase, cytoplasmic"/>
    <property type="match status" value="1"/>
</dbReference>
<dbReference type="Gene3D" id="2.40.30.130">
    <property type="match status" value="1"/>
</dbReference>
<dbReference type="Gene3D" id="3.10.310.40">
    <property type="match status" value="1"/>
</dbReference>
<dbReference type="Gene3D" id="3.30.54.20">
    <property type="match status" value="1"/>
</dbReference>
<dbReference type="Gene3D" id="6.10.250.550">
    <property type="match status" value="1"/>
</dbReference>
<dbReference type="Gene3D" id="3.30.930.10">
    <property type="entry name" value="Bira Bifunctional Protein, Domain 2"/>
    <property type="match status" value="1"/>
</dbReference>
<dbReference type="Gene3D" id="3.30.980.10">
    <property type="entry name" value="Threonyl-trna Synthetase, Chain A, domain 2"/>
    <property type="match status" value="1"/>
</dbReference>
<dbReference type="HAMAP" id="MF_00036_B">
    <property type="entry name" value="Ala_tRNA_synth_B"/>
    <property type="match status" value="1"/>
</dbReference>
<dbReference type="InterPro" id="IPR045864">
    <property type="entry name" value="aa-tRNA-synth_II/BPL/LPL"/>
</dbReference>
<dbReference type="InterPro" id="IPR002318">
    <property type="entry name" value="Ala-tRNA-lgiase_IIc"/>
</dbReference>
<dbReference type="InterPro" id="IPR018162">
    <property type="entry name" value="Ala-tRNA-ligase_IIc_anticod-bd"/>
</dbReference>
<dbReference type="InterPro" id="IPR018165">
    <property type="entry name" value="Ala-tRNA-synth_IIc_core"/>
</dbReference>
<dbReference type="InterPro" id="IPR018164">
    <property type="entry name" value="Ala-tRNA-synth_IIc_N"/>
</dbReference>
<dbReference type="InterPro" id="IPR050058">
    <property type="entry name" value="Ala-tRNA_ligase"/>
</dbReference>
<dbReference type="InterPro" id="IPR023033">
    <property type="entry name" value="Ala_tRNA_ligase_euk/bac"/>
</dbReference>
<dbReference type="InterPro" id="IPR003156">
    <property type="entry name" value="DHHA1_dom"/>
</dbReference>
<dbReference type="InterPro" id="IPR018163">
    <property type="entry name" value="Thr/Ala-tRNA-synth_IIc_edit"/>
</dbReference>
<dbReference type="InterPro" id="IPR009000">
    <property type="entry name" value="Transl_B-barrel_sf"/>
</dbReference>
<dbReference type="InterPro" id="IPR012947">
    <property type="entry name" value="tRNA_SAD"/>
</dbReference>
<dbReference type="NCBIfam" id="TIGR00344">
    <property type="entry name" value="alaS"/>
    <property type="match status" value="1"/>
</dbReference>
<dbReference type="PANTHER" id="PTHR11777:SF9">
    <property type="entry name" value="ALANINE--TRNA LIGASE, CYTOPLASMIC"/>
    <property type="match status" value="1"/>
</dbReference>
<dbReference type="PANTHER" id="PTHR11777">
    <property type="entry name" value="ALANYL-TRNA SYNTHETASE"/>
    <property type="match status" value="1"/>
</dbReference>
<dbReference type="Pfam" id="PF02272">
    <property type="entry name" value="DHHA1"/>
    <property type="match status" value="1"/>
</dbReference>
<dbReference type="Pfam" id="PF01411">
    <property type="entry name" value="tRNA-synt_2c"/>
    <property type="match status" value="1"/>
</dbReference>
<dbReference type="Pfam" id="PF07973">
    <property type="entry name" value="tRNA_SAD"/>
    <property type="match status" value="1"/>
</dbReference>
<dbReference type="PRINTS" id="PR00980">
    <property type="entry name" value="TRNASYNTHALA"/>
</dbReference>
<dbReference type="SMART" id="SM00863">
    <property type="entry name" value="tRNA_SAD"/>
    <property type="match status" value="1"/>
</dbReference>
<dbReference type="SUPFAM" id="SSF55681">
    <property type="entry name" value="Class II aaRS and biotin synthetases"/>
    <property type="match status" value="1"/>
</dbReference>
<dbReference type="SUPFAM" id="SSF101353">
    <property type="entry name" value="Putative anticodon-binding domain of alanyl-tRNA synthetase (AlaRS)"/>
    <property type="match status" value="1"/>
</dbReference>
<dbReference type="SUPFAM" id="SSF55186">
    <property type="entry name" value="ThrRS/AlaRS common domain"/>
    <property type="match status" value="1"/>
</dbReference>
<dbReference type="SUPFAM" id="SSF50447">
    <property type="entry name" value="Translation proteins"/>
    <property type="match status" value="1"/>
</dbReference>
<dbReference type="PROSITE" id="PS50860">
    <property type="entry name" value="AA_TRNA_LIGASE_II_ALA"/>
    <property type="match status" value="1"/>
</dbReference>